<gene>
    <name evidence="1" type="primary">glyS</name>
    <name type="ordered locus">SP_1474</name>
</gene>
<proteinExistence type="inferred from homology"/>
<organism>
    <name type="scientific">Streptococcus pneumoniae serotype 4 (strain ATCC BAA-334 / TIGR4)</name>
    <dbReference type="NCBI Taxonomy" id="170187"/>
    <lineage>
        <taxon>Bacteria</taxon>
        <taxon>Bacillati</taxon>
        <taxon>Bacillota</taxon>
        <taxon>Bacilli</taxon>
        <taxon>Lactobacillales</taxon>
        <taxon>Streptococcaceae</taxon>
        <taxon>Streptococcus</taxon>
    </lineage>
</organism>
<feature type="chain" id="PRO_0000072927" description="Glycine--tRNA ligase beta subunit">
    <location>
        <begin position="1"/>
        <end position="678"/>
    </location>
</feature>
<dbReference type="EC" id="6.1.1.14" evidence="1"/>
<dbReference type="EMBL" id="AE005672">
    <property type="protein sequence ID" value="AAK75568.1"/>
    <property type="molecule type" value="Genomic_DNA"/>
</dbReference>
<dbReference type="PIR" id="G95171">
    <property type="entry name" value="G95171"/>
</dbReference>
<dbReference type="RefSeq" id="WP_000164779.1">
    <property type="nucleotide sequence ID" value="NZ_CP155539.1"/>
</dbReference>
<dbReference type="SMR" id="Q97PW6"/>
<dbReference type="PaxDb" id="170187-SP_1474"/>
<dbReference type="EnsemblBacteria" id="AAK75568">
    <property type="protein sequence ID" value="AAK75568"/>
    <property type="gene ID" value="SP_1474"/>
</dbReference>
<dbReference type="KEGG" id="spn:SP_1474"/>
<dbReference type="eggNOG" id="COG0751">
    <property type="taxonomic scope" value="Bacteria"/>
</dbReference>
<dbReference type="PhylomeDB" id="Q97PW6"/>
<dbReference type="BioCyc" id="SPNE170187:G1FZB-1490-MONOMER"/>
<dbReference type="Proteomes" id="UP000000585">
    <property type="component" value="Chromosome"/>
</dbReference>
<dbReference type="GO" id="GO:0005829">
    <property type="term" value="C:cytosol"/>
    <property type="evidence" value="ECO:0007669"/>
    <property type="project" value="TreeGrafter"/>
</dbReference>
<dbReference type="GO" id="GO:0004814">
    <property type="term" value="F:arginine-tRNA ligase activity"/>
    <property type="evidence" value="ECO:0007669"/>
    <property type="project" value="InterPro"/>
</dbReference>
<dbReference type="GO" id="GO:0005524">
    <property type="term" value="F:ATP binding"/>
    <property type="evidence" value="ECO:0007669"/>
    <property type="project" value="UniProtKB-UniRule"/>
</dbReference>
<dbReference type="GO" id="GO:0004820">
    <property type="term" value="F:glycine-tRNA ligase activity"/>
    <property type="evidence" value="ECO:0007669"/>
    <property type="project" value="UniProtKB-UniRule"/>
</dbReference>
<dbReference type="GO" id="GO:0006420">
    <property type="term" value="P:arginyl-tRNA aminoacylation"/>
    <property type="evidence" value="ECO:0007669"/>
    <property type="project" value="InterPro"/>
</dbReference>
<dbReference type="GO" id="GO:0006426">
    <property type="term" value="P:glycyl-tRNA aminoacylation"/>
    <property type="evidence" value="ECO:0007669"/>
    <property type="project" value="UniProtKB-UniRule"/>
</dbReference>
<dbReference type="HAMAP" id="MF_00255">
    <property type="entry name" value="Gly_tRNA_synth_beta"/>
    <property type="match status" value="1"/>
</dbReference>
<dbReference type="InterPro" id="IPR008909">
    <property type="entry name" value="DALR_anticod-bd"/>
</dbReference>
<dbReference type="InterPro" id="IPR015944">
    <property type="entry name" value="Gly-tRNA-synth_bsu"/>
</dbReference>
<dbReference type="InterPro" id="IPR006194">
    <property type="entry name" value="Gly-tRNA-synth_heterodimer"/>
</dbReference>
<dbReference type="NCBIfam" id="TIGR00211">
    <property type="entry name" value="glyS"/>
    <property type="match status" value="1"/>
</dbReference>
<dbReference type="PANTHER" id="PTHR30075:SF2">
    <property type="entry name" value="GLYCINE--TRNA LIGASE, CHLOROPLASTIC_MITOCHONDRIAL 2"/>
    <property type="match status" value="1"/>
</dbReference>
<dbReference type="PANTHER" id="PTHR30075">
    <property type="entry name" value="GLYCYL-TRNA SYNTHETASE"/>
    <property type="match status" value="1"/>
</dbReference>
<dbReference type="Pfam" id="PF05746">
    <property type="entry name" value="DALR_1"/>
    <property type="match status" value="1"/>
</dbReference>
<dbReference type="Pfam" id="PF02092">
    <property type="entry name" value="tRNA_synt_2f"/>
    <property type="match status" value="1"/>
</dbReference>
<dbReference type="PRINTS" id="PR01045">
    <property type="entry name" value="TRNASYNTHGB"/>
</dbReference>
<dbReference type="SUPFAM" id="SSF109604">
    <property type="entry name" value="HD-domain/PDEase-like"/>
    <property type="match status" value="1"/>
</dbReference>
<dbReference type="PROSITE" id="PS50861">
    <property type="entry name" value="AA_TRNA_LIGASE_II_GLYAB"/>
    <property type="match status" value="1"/>
</dbReference>
<reference key="1">
    <citation type="journal article" date="2001" name="Science">
        <title>Complete genome sequence of a virulent isolate of Streptococcus pneumoniae.</title>
        <authorList>
            <person name="Tettelin H."/>
            <person name="Nelson K.E."/>
            <person name="Paulsen I.T."/>
            <person name="Eisen J.A."/>
            <person name="Read T.D."/>
            <person name="Peterson S.N."/>
            <person name="Heidelberg J.F."/>
            <person name="DeBoy R.T."/>
            <person name="Haft D.H."/>
            <person name="Dodson R.J."/>
            <person name="Durkin A.S."/>
            <person name="Gwinn M.L."/>
            <person name="Kolonay J.F."/>
            <person name="Nelson W.C."/>
            <person name="Peterson J.D."/>
            <person name="Umayam L.A."/>
            <person name="White O."/>
            <person name="Salzberg S.L."/>
            <person name="Lewis M.R."/>
            <person name="Radune D."/>
            <person name="Holtzapple E.K."/>
            <person name="Khouri H.M."/>
            <person name="Wolf A.M."/>
            <person name="Utterback T.R."/>
            <person name="Hansen C.L."/>
            <person name="McDonald L.A."/>
            <person name="Feldblyum T.V."/>
            <person name="Angiuoli S.V."/>
            <person name="Dickinson T."/>
            <person name="Hickey E.K."/>
            <person name="Holt I.E."/>
            <person name="Loftus B.J."/>
            <person name="Yang F."/>
            <person name="Smith H.O."/>
            <person name="Venter J.C."/>
            <person name="Dougherty B.A."/>
            <person name="Morrison D.A."/>
            <person name="Hollingshead S.K."/>
            <person name="Fraser C.M."/>
        </authorList>
    </citation>
    <scope>NUCLEOTIDE SEQUENCE [LARGE SCALE GENOMIC DNA]</scope>
    <source>
        <strain>ATCC BAA-334 / TIGR4</strain>
    </source>
</reference>
<protein>
    <recommendedName>
        <fullName evidence="1">Glycine--tRNA ligase beta subunit</fullName>
        <ecNumber evidence="1">6.1.1.14</ecNumber>
    </recommendedName>
    <alternativeName>
        <fullName evidence="1">Glycyl-tRNA synthetase beta subunit</fullName>
        <shortName evidence="1">GlyRS</shortName>
    </alternativeName>
</protein>
<comment type="catalytic activity">
    <reaction evidence="1">
        <text>tRNA(Gly) + glycine + ATP = glycyl-tRNA(Gly) + AMP + diphosphate</text>
        <dbReference type="Rhea" id="RHEA:16013"/>
        <dbReference type="Rhea" id="RHEA-COMP:9664"/>
        <dbReference type="Rhea" id="RHEA-COMP:9683"/>
        <dbReference type="ChEBI" id="CHEBI:30616"/>
        <dbReference type="ChEBI" id="CHEBI:33019"/>
        <dbReference type="ChEBI" id="CHEBI:57305"/>
        <dbReference type="ChEBI" id="CHEBI:78442"/>
        <dbReference type="ChEBI" id="CHEBI:78522"/>
        <dbReference type="ChEBI" id="CHEBI:456215"/>
        <dbReference type="EC" id="6.1.1.14"/>
    </reaction>
</comment>
<comment type="subunit">
    <text evidence="1">Tetramer of two alpha and two beta subunits.</text>
</comment>
<comment type="subcellular location">
    <subcellularLocation>
        <location evidence="1">Cytoplasm</location>
    </subcellularLocation>
</comment>
<comment type="similarity">
    <text evidence="1">Belongs to the class-II aminoacyl-tRNA synthetase family.</text>
</comment>
<evidence type="ECO:0000255" key="1">
    <source>
        <dbReference type="HAMAP-Rule" id="MF_00255"/>
    </source>
</evidence>
<accession>Q97PW6</accession>
<sequence>MTKNLLVELGLEELPAYVVTPSEKQLGEKMAAFLKGKRLSFEAIQTFSTPRRLAVRVTGLADKQSDLTEDFKGPAKKIALDSDGNFTKAAQGFVRGKGLTVEDIEFREIKGEEYVYVTKEEIGQAVEAIVPGIVDVLKSLTFPVSMHWAGNSFEYIRPVHTLTVLLDEQEFDLDFLDIKGSRVSRGHRFLGQETKIQSALSYEEDLRKQFVIADPCEREQMIVDQIKEIEAKHGVRIEIDADLLNEVLNLVEYPTAFMGSFDAKYLEVPEEVLVTSMKEHQRYFVVRDQDGKLLPNFISVRNGNAERLKNVIKGNEKVLVARLEDGEFFWREDQKLVISDLVEKLNNVTFHEKIGSLREHMIRTGQITVLLAEKASLSVDETVDLARAAAIYKFDLLTGMVGEFDELQGIMGEKYTLLAGETPAVAAAIREHYMPTSAEGELPESKVGAVLAIADKLDTILSFFSVGLIPSGSNDPYALRRATQGVVRILDAFGWHIAMDELIDSLYALKFDSLTYENKAEVMDFIKARVDKMMGSTPKDIKEAVLAGSNFVVADMLEAASALVEVSKEEDFKPSVESLSRAFNLAEKAEGVATVDSALFENDQEKALAEAVETLILSGPASQQLKQLFALSPVIDAFFENTMVMAEDQAVRQNRLAILSQLTKKAAKFACFNQINTK</sequence>
<keyword id="KW-0030">Aminoacyl-tRNA synthetase</keyword>
<keyword id="KW-0067">ATP-binding</keyword>
<keyword id="KW-0963">Cytoplasm</keyword>
<keyword id="KW-0436">Ligase</keyword>
<keyword id="KW-0547">Nucleotide-binding</keyword>
<keyword id="KW-0648">Protein biosynthesis</keyword>
<keyword id="KW-1185">Reference proteome</keyword>
<name>SYGB_STRPN</name>